<sequence length="77" mass="8931">MPKRVLQGVVISSKTDKTVTVKVERKFKHPIYKKFVKVSKKYAAHDIENKYKEGDKVSIVESRPISKTKTWVVLNLE</sequence>
<proteinExistence type="inferred from homology"/>
<name>RS17_RICPR</name>
<feature type="chain" id="PRO_0000128473" description="Small ribosomal subunit protein uS17">
    <location>
        <begin position="1"/>
        <end position="77"/>
    </location>
</feature>
<gene>
    <name evidence="1" type="primary">rpsQ</name>
    <name type="ordered locus">RP650</name>
</gene>
<reference key="1">
    <citation type="journal article" date="1998" name="Nature">
        <title>The genome sequence of Rickettsia prowazekii and the origin of mitochondria.</title>
        <authorList>
            <person name="Andersson S.G.E."/>
            <person name="Zomorodipour A."/>
            <person name="Andersson J.O."/>
            <person name="Sicheritz-Ponten T."/>
            <person name="Alsmark U.C.M."/>
            <person name="Podowski R.M."/>
            <person name="Naeslund A.K."/>
            <person name="Eriksson A.-S."/>
            <person name="Winkler H.H."/>
            <person name="Kurland C.G."/>
        </authorList>
    </citation>
    <scope>NUCLEOTIDE SEQUENCE [LARGE SCALE GENOMIC DNA]</scope>
    <source>
        <strain>Madrid E</strain>
    </source>
</reference>
<organism>
    <name type="scientific">Rickettsia prowazekii (strain Madrid E)</name>
    <dbReference type="NCBI Taxonomy" id="272947"/>
    <lineage>
        <taxon>Bacteria</taxon>
        <taxon>Pseudomonadati</taxon>
        <taxon>Pseudomonadota</taxon>
        <taxon>Alphaproteobacteria</taxon>
        <taxon>Rickettsiales</taxon>
        <taxon>Rickettsiaceae</taxon>
        <taxon>Rickettsieae</taxon>
        <taxon>Rickettsia</taxon>
        <taxon>typhus group</taxon>
    </lineage>
</organism>
<comment type="function">
    <text evidence="1">One of the primary rRNA binding proteins, it binds specifically to the 5'-end of 16S ribosomal RNA.</text>
</comment>
<comment type="subunit">
    <text evidence="1">Part of the 30S ribosomal subunit.</text>
</comment>
<comment type="similarity">
    <text evidence="1">Belongs to the universal ribosomal protein uS17 family.</text>
</comment>
<keyword id="KW-1185">Reference proteome</keyword>
<keyword id="KW-0687">Ribonucleoprotein</keyword>
<keyword id="KW-0689">Ribosomal protein</keyword>
<keyword id="KW-0694">RNA-binding</keyword>
<keyword id="KW-0699">rRNA-binding</keyword>
<dbReference type="EMBL" id="AJ235272">
    <property type="protein sequence ID" value="CAA15090.1"/>
    <property type="molecule type" value="Genomic_DNA"/>
</dbReference>
<dbReference type="PIR" id="H71670">
    <property type="entry name" value="H71670"/>
</dbReference>
<dbReference type="RefSeq" id="NP_221014.1">
    <property type="nucleotide sequence ID" value="NC_000963.1"/>
</dbReference>
<dbReference type="RefSeq" id="WP_004596215.1">
    <property type="nucleotide sequence ID" value="NC_000963.1"/>
</dbReference>
<dbReference type="SMR" id="Q9ZCR4"/>
<dbReference type="STRING" id="272947.gene:17555727"/>
<dbReference type="EnsemblBacteria" id="CAA15090">
    <property type="protein sequence ID" value="CAA15090"/>
    <property type="gene ID" value="CAA15090"/>
</dbReference>
<dbReference type="GeneID" id="57569775"/>
<dbReference type="KEGG" id="rpr:RP650"/>
<dbReference type="PATRIC" id="fig|272947.5.peg.672"/>
<dbReference type="eggNOG" id="COG0186">
    <property type="taxonomic scope" value="Bacteria"/>
</dbReference>
<dbReference type="HOGENOM" id="CLU_073626_1_1_5"/>
<dbReference type="OrthoDB" id="9811714at2"/>
<dbReference type="Proteomes" id="UP000002480">
    <property type="component" value="Chromosome"/>
</dbReference>
<dbReference type="GO" id="GO:0022627">
    <property type="term" value="C:cytosolic small ribosomal subunit"/>
    <property type="evidence" value="ECO:0007669"/>
    <property type="project" value="TreeGrafter"/>
</dbReference>
<dbReference type="GO" id="GO:0019843">
    <property type="term" value="F:rRNA binding"/>
    <property type="evidence" value="ECO:0007669"/>
    <property type="project" value="UniProtKB-UniRule"/>
</dbReference>
<dbReference type="GO" id="GO:0003735">
    <property type="term" value="F:structural constituent of ribosome"/>
    <property type="evidence" value="ECO:0007669"/>
    <property type="project" value="InterPro"/>
</dbReference>
<dbReference type="GO" id="GO:0006412">
    <property type="term" value="P:translation"/>
    <property type="evidence" value="ECO:0007669"/>
    <property type="project" value="UniProtKB-UniRule"/>
</dbReference>
<dbReference type="CDD" id="cd00364">
    <property type="entry name" value="Ribosomal_uS17"/>
    <property type="match status" value="1"/>
</dbReference>
<dbReference type="Gene3D" id="2.40.50.140">
    <property type="entry name" value="Nucleic acid-binding proteins"/>
    <property type="match status" value="1"/>
</dbReference>
<dbReference type="HAMAP" id="MF_01345_B">
    <property type="entry name" value="Ribosomal_uS17_B"/>
    <property type="match status" value="1"/>
</dbReference>
<dbReference type="InterPro" id="IPR012340">
    <property type="entry name" value="NA-bd_OB-fold"/>
</dbReference>
<dbReference type="InterPro" id="IPR000266">
    <property type="entry name" value="Ribosomal_uS17"/>
</dbReference>
<dbReference type="InterPro" id="IPR019984">
    <property type="entry name" value="Ribosomal_uS17_bact/chlr"/>
</dbReference>
<dbReference type="InterPro" id="IPR019979">
    <property type="entry name" value="Ribosomal_uS17_CS"/>
</dbReference>
<dbReference type="NCBIfam" id="NF004123">
    <property type="entry name" value="PRK05610.1"/>
    <property type="match status" value="1"/>
</dbReference>
<dbReference type="NCBIfam" id="TIGR03635">
    <property type="entry name" value="uS17_bact"/>
    <property type="match status" value="1"/>
</dbReference>
<dbReference type="PANTHER" id="PTHR10744">
    <property type="entry name" value="40S RIBOSOMAL PROTEIN S11 FAMILY MEMBER"/>
    <property type="match status" value="1"/>
</dbReference>
<dbReference type="PANTHER" id="PTHR10744:SF1">
    <property type="entry name" value="SMALL RIBOSOMAL SUBUNIT PROTEIN US17M"/>
    <property type="match status" value="1"/>
</dbReference>
<dbReference type="Pfam" id="PF00366">
    <property type="entry name" value="Ribosomal_S17"/>
    <property type="match status" value="1"/>
</dbReference>
<dbReference type="PRINTS" id="PR00973">
    <property type="entry name" value="RIBOSOMALS17"/>
</dbReference>
<dbReference type="SUPFAM" id="SSF50249">
    <property type="entry name" value="Nucleic acid-binding proteins"/>
    <property type="match status" value="1"/>
</dbReference>
<dbReference type="PROSITE" id="PS00056">
    <property type="entry name" value="RIBOSOMAL_S17"/>
    <property type="match status" value="1"/>
</dbReference>
<protein>
    <recommendedName>
        <fullName evidence="1">Small ribosomal subunit protein uS17</fullName>
    </recommendedName>
    <alternativeName>
        <fullName evidence="2">30S ribosomal protein S17</fullName>
    </alternativeName>
</protein>
<accession>Q9ZCR4</accession>
<evidence type="ECO:0000255" key="1">
    <source>
        <dbReference type="HAMAP-Rule" id="MF_01345"/>
    </source>
</evidence>
<evidence type="ECO:0000305" key="2"/>